<name>XGPT_BUCAP</name>
<proteinExistence type="inferred from homology"/>
<dbReference type="EC" id="2.4.2.-" evidence="1"/>
<dbReference type="EC" id="2.4.2.22" evidence="1"/>
<dbReference type="EMBL" id="AE013218">
    <property type="protein sequence ID" value="AAM67801.1"/>
    <property type="molecule type" value="Genomic_DNA"/>
</dbReference>
<dbReference type="RefSeq" id="WP_011053768.1">
    <property type="nucleotide sequence ID" value="NC_004061.1"/>
</dbReference>
<dbReference type="SMR" id="Q8K9R8"/>
<dbReference type="STRING" id="198804.BUsg_242"/>
<dbReference type="GeneID" id="93003712"/>
<dbReference type="KEGG" id="bas:BUsg_242"/>
<dbReference type="eggNOG" id="COG2236">
    <property type="taxonomic scope" value="Bacteria"/>
</dbReference>
<dbReference type="HOGENOM" id="CLU_080904_3_0_6"/>
<dbReference type="UniPathway" id="UPA00602">
    <property type="reaction ID" value="UER00658"/>
</dbReference>
<dbReference type="UniPathway" id="UPA00909">
    <property type="reaction ID" value="UER00887"/>
</dbReference>
<dbReference type="Proteomes" id="UP000000416">
    <property type="component" value="Chromosome"/>
</dbReference>
<dbReference type="GO" id="GO:0005829">
    <property type="term" value="C:cytosol"/>
    <property type="evidence" value="ECO:0007669"/>
    <property type="project" value="TreeGrafter"/>
</dbReference>
<dbReference type="GO" id="GO:0005886">
    <property type="term" value="C:plasma membrane"/>
    <property type="evidence" value="ECO:0007669"/>
    <property type="project" value="UniProtKB-SubCell"/>
</dbReference>
<dbReference type="GO" id="GO:0052657">
    <property type="term" value="F:guanine phosphoribosyltransferase activity"/>
    <property type="evidence" value="ECO:0007669"/>
    <property type="project" value="RHEA"/>
</dbReference>
<dbReference type="GO" id="GO:0004422">
    <property type="term" value="F:hypoxanthine phosphoribosyltransferase activity"/>
    <property type="evidence" value="ECO:0007669"/>
    <property type="project" value="RHEA"/>
</dbReference>
<dbReference type="GO" id="GO:0000287">
    <property type="term" value="F:magnesium ion binding"/>
    <property type="evidence" value="ECO:0007669"/>
    <property type="project" value="UniProtKB-UniRule"/>
</dbReference>
<dbReference type="GO" id="GO:0000310">
    <property type="term" value="F:xanthine phosphoribosyltransferase activity"/>
    <property type="evidence" value="ECO:0007669"/>
    <property type="project" value="UniProtKB-UniRule"/>
</dbReference>
<dbReference type="GO" id="GO:0032263">
    <property type="term" value="P:GMP salvage"/>
    <property type="evidence" value="ECO:0007669"/>
    <property type="project" value="UniProtKB-UniRule"/>
</dbReference>
<dbReference type="GO" id="GO:0032264">
    <property type="term" value="P:IMP salvage"/>
    <property type="evidence" value="ECO:0007669"/>
    <property type="project" value="TreeGrafter"/>
</dbReference>
<dbReference type="GO" id="GO:0006166">
    <property type="term" value="P:purine ribonucleoside salvage"/>
    <property type="evidence" value="ECO:0007669"/>
    <property type="project" value="UniProtKB-KW"/>
</dbReference>
<dbReference type="GO" id="GO:0032265">
    <property type="term" value="P:XMP salvage"/>
    <property type="evidence" value="ECO:0007669"/>
    <property type="project" value="UniProtKB-UniRule"/>
</dbReference>
<dbReference type="CDD" id="cd06223">
    <property type="entry name" value="PRTases_typeI"/>
    <property type="match status" value="1"/>
</dbReference>
<dbReference type="Gene3D" id="3.40.50.2020">
    <property type="match status" value="1"/>
</dbReference>
<dbReference type="HAMAP" id="MF_01903">
    <property type="entry name" value="XGPRT"/>
    <property type="match status" value="1"/>
</dbReference>
<dbReference type="InterPro" id="IPR000836">
    <property type="entry name" value="PRibTrfase_dom"/>
</dbReference>
<dbReference type="InterPro" id="IPR029057">
    <property type="entry name" value="PRTase-like"/>
</dbReference>
<dbReference type="InterPro" id="IPR023747">
    <property type="entry name" value="Xanthine_Guanine_PRibTrfase"/>
</dbReference>
<dbReference type="NCBIfam" id="NF006613">
    <property type="entry name" value="PRK09177.1"/>
    <property type="match status" value="1"/>
</dbReference>
<dbReference type="PANTHER" id="PTHR39563">
    <property type="entry name" value="XANTHINE PHOSPHORIBOSYLTRANSFERASE"/>
    <property type="match status" value="1"/>
</dbReference>
<dbReference type="PANTHER" id="PTHR39563:SF1">
    <property type="entry name" value="XANTHINE-GUANINE PHOSPHORIBOSYLTRANSFERASE"/>
    <property type="match status" value="1"/>
</dbReference>
<dbReference type="Pfam" id="PF00156">
    <property type="entry name" value="Pribosyltran"/>
    <property type="match status" value="1"/>
</dbReference>
<dbReference type="SUPFAM" id="SSF53271">
    <property type="entry name" value="PRTase-like"/>
    <property type="match status" value="1"/>
</dbReference>
<dbReference type="PROSITE" id="PS00103">
    <property type="entry name" value="PUR_PYR_PR_TRANSFER"/>
    <property type="match status" value="1"/>
</dbReference>
<accession>Q8K9R8</accession>
<reference key="1">
    <citation type="journal article" date="2002" name="Science">
        <title>50 million years of genomic stasis in endosymbiotic bacteria.</title>
        <authorList>
            <person name="Tamas I."/>
            <person name="Klasson L."/>
            <person name="Canbaeck B."/>
            <person name="Naeslund A.K."/>
            <person name="Eriksson A.-S."/>
            <person name="Wernegreen J.J."/>
            <person name="Sandstroem J.P."/>
            <person name="Moran N.A."/>
            <person name="Andersson S.G.E."/>
        </authorList>
    </citation>
    <scope>NUCLEOTIDE SEQUENCE [LARGE SCALE GENOMIC DNA]</scope>
    <source>
        <strain>Sg</strain>
    </source>
</reference>
<evidence type="ECO:0000255" key="1">
    <source>
        <dbReference type="HAMAP-Rule" id="MF_01903"/>
    </source>
</evidence>
<organism>
    <name type="scientific">Buchnera aphidicola subsp. Schizaphis graminum (strain Sg)</name>
    <dbReference type="NCBI Taxonomy" id="198804"/>
    <lineage>
        <taxon>Bacteria</taxon>
        <taxon>Pseudomonadati</taxon>
        <taxon>Pseudomonadota</taxon>
        <taxon>Gammaproteobacteria</taxon>
        <taxon>Enterobacterales</taxon>
        <taxon>Erwiniaceae</taxon>
        <taxon>Buchnera</taxon>
    </lineage>
</organism>
<comment type="function">
    <text evidence="1">Purine salvage pathway enzyme that catalyzes the transfer of the ribosyl-5-phosphate group from 5-phospho-alpha-D-ribose 1-diphosphate (PRPP) to the N9 position of the 6-oxopurines guanine and xanthine to form the corresponding ribonucleotides GMP (guanosine 5'-monophosphate) and XMP (xanthosine 5'-monophosphate), with the release of PPi. To a lesser extent, also acts on hypoxanthine.</text>
</comment>
<comment type="catalytic activity">
    <reaction evidence="1">
        <text>GMP + diphosphate = guanine + 5-phospho-alpha-D-ribose 1-diphosphate</text>
        <dbReference type="Rhea" id="RHEA:25424"/>
        <dbReference type="ChEBI" id="CHEBI:16235"/>
        <dbReference type="ChEBI" id="CHEBI:33019"/>
        <dbReference type="ChEBI" id="CHEBI:58017"/>
        <dbReference type="ChEBI" id="CHEBI:58115"/>
    </reaction>
    <physiologicalReaction direction="right-to-left" evidence="1">
        <dbReference type="Rhea" id="RHEA:25426"/>
    </physiologicalReaction>
</comment>
<comment type="catalytic activity">
    <reaction evidence="1">
        <text>XMP + diphosphate = xanthine + 5-phospho-alpha-D-ribose 1-diphosphate</text>
        <dbReference type="Rhea" id="RHEA:10800"/>
        <dbReference type="ChEBI" id="CHEBI:17712"/>
        <dbReference type="ChEBI" id="CHEBI:33019"/>
        <dbReference type="ChEBI" id="CHEBI:57464"/>
        <dbReference type="ChEBI" id="CHEBI:58017"/>
        <dbReference type="EC" id="2.4.2.22"/>
    </reaction>
    <physiologicalReaction direction="right-to-left" evidence="1">
        <dbReference type="Rhea" id="RHEA:10802"/>
    </physiologicalReaction>
</comment>
<comment type="catalytic activity">
    <reaction evidence="1">
        <text>IMP + diphosphate = hypoxanthine + 5-phospho-alpha-D-ribose 1-diphosphate</text>
        <dbReference type="Rhea" id="RHEA:17973"/>
        <dbReference type="ChEBI" id="CHEBI:17368"/>
        <dbReference type="ChEBI" id="CHEBI:33019"/>
        <dbReference type="ChEBI" id="CHEBI:58017"/>
        <dbReference type="ChEBI" id="CHEBI:58053"/>
    </reaction>
    <physiologicalReaction direction="right-to-left" evidence="1">
        <dbReference type="Rhea" id="RHEA:17975"/>
    </physiologicalReaction>
</comment>
<comment type="cofactor">
    <cofactor evidence="1">
        <name>Mg(2+)</name>
        <dbReference type="ChEBI" id="CHEBI:18420"/>
    </cofactor>
</comment>
<comment type="pathway">
    <text evidence="1">Purine metabolism; GMP biosynthesis via salvage pathway; GMP from guanine: step 1/1.</text>
</comment>
<comment type="pathway">
    <text evidence="1">Purine metabolism; XMP biosynthesis via salvage pathway; XMP from xanthine: step 1/1.</text>
</comment>
<comment type="subunit">
    <text evidence="1">Homotetramer.</text>
</comment>
<comment type="subcellular location">
    <subcellularLocation>
        <location evidence="1">Cell inner membrane</location>
        <topology evidence="1">Peripheral membrane protein</topology>
    </subcellularLocation>
</comment>
<comment type="similarity">
    <text evidence="1">Belongs to the purine/pyrimidine phosphoribosyltransferase family. XGPT subfamily.</text>
</comment>
<feature type="chain" id="PRO_0000139662" description="Xanthine-guanine phosphoribosyltransferase">
    <location>
        <begin position="1"/>
        <end position="154"/>
    </location>
</feature>
<feature type="binding site" evidence="1">
    <location>
        <begin position="38"/>
        <end position="39"/>
    </location>
    <ligand>
        <name>5-phospho-alpha-D-ribose 1-diphosphate</name>
        <dbReference type="ChEBI" id="CHEBI:58017"/>
    </ligand>
</feature>
<feature type="binding site" evidence="1">
    <location>
        <position position="71"/>
    </location>
    <ligand>
        <name>5-phospho-alpha-D-ribose 1-diphosphate</name>
        <dbReference type="ChEBI" id="CHEBI:58017"/>
    </ligand>
</feature>
<feature type="binding site" evidence="1">
    <location>
        <position position="71"/>
    </location>
    <ligand>
        <name>GMP</name>
        <dbReference type="ChEBI" id="CHEBI:58115"/>
    </ligand>
</feature>
<feature type="binding site" evidence="1">
    <location>
        <begin position="90"/>
        <end position="98"/>
    </location>
    <ligand>
        <name>5-phospho-alpha-D-ribose 1-diphosphate</name>
        <dbReference type="ChEBI" id="CHEBI:58017"/>
    </ligand>
</feature>
<feature type="binding site" evidence="1">
    <location>
        <position position="91"/>
    </location>
    <ligand>
        <name>Mg(2+)</name>
        <dbReference type="ChEBI" id="CHEBI:18420"/>
    </ligand>
</feature>
<feature type="binding site" evidence="1">
    <location>
        <begin position="94"/>
        <end position="98"/>
    </location>
    <ligand>
        <name>GMP</name>
        <dbReference type="ChEBI" id="CHEBI:58115"/>
    </ligand>
</feature>
<feature type="binding site" evidence="1">
    <location>
        <position position="94"/>
    </location>
    <ligand>
        <name>guanine</name>
        <dbReference type="ChEBI" id="CHEBI:16235"/>
    </ligand>
</feature>
<feature type="binding site" evidence="1">
    <location>
        <position position="94"/>
    </location>
    <ligand>
        <name>xanthine</name>
        <dbReference type="ChEBI" id="CHEBI:17712"/>
    </ligand>
</feature>
<feature type="binding site" evidence="1">
    <location>
        <begin position="136"/>
        <end position="137"/>
    </location>
    <ligand>
        <name>GMP</name>
        <dbReference type="ChEBI" id="CHEBI:58115"/>
    </ligand>
</feature>
<feature type="binding site" evidence="1">
    <location>
        <position position="137"/>
    </location>
    <ligand>
        <name>guanine</name>
        <dbReference type="ChEBI" id="CHEBI:16235"/>
    </ligand>
</feature>
<feature type="binding site" evidence="1">
    <location>
        <position position="137"/>
    </location>
    <ligand>
        <name>xanthine</name>
        <dbReference type="ChEBI" id="CHEBI:17712"/>
    </ligand>
</feature>
<gene>
    <name evidence="1" type="primary">gpt</name>
    <name type="ordered locus">BUsg_242</name>
</gene>
<protein>
    <recommendedName>
        <fullName evidence="1">Xanthine-guanine phosphoribosyltransferase</fullName>
        <shortName evidence="1">XGPRT</shortName>
        <ecNumber evidence="1">2.4.2.-</ecNumber>
        <ecNumber evidence="1">2.4.2.22</ecNumber>
    </recommendedName>
    <alternativeName>
        <fullName evidence="1">Xanthine phosphoribosyltransferase</fullName>
    </alternativeName>
</protein>
<sequence>MSEKYIVTWDMLQIHTRILAHRLLKTKNAWNGIIAVSRGGLVPSAILARELGIRCVDTVCIASYNYDCLQKNRKIIKKARGDGEKIIVVDDLVDTGGTAKIIRNLYPKAYFVTIFAKPLGRLLVDDYIIDIDQNIWIEQPWDMSISYISPLIKK</sequence>
<keyword id="KW-0997">Cell inner membrane</keyword>
<keyword id="KW-1003">Cell membrane</keyword>
<keyword id="KW-0328">Glycosyltransferase</keyword>
<keyword id="KW-0460">Magnesium</keyword>
<keyword id="KW-0472">Membrane</keyword>
<keyword id="KW-0479">Metal-binding</keyword>
<keyword id="KW-0660">Purine salvage</keyword>
<keyword id="KW-0808">Transferase</keyword>